<dbReference type="EC" id="3.1.13.1"/>
<dbReference type="EMBL" id="U15461">
    <property type="protein sequence ID" value="AAC49144.1"/>
    <property type="molecule type" value="Genomic_DNA"/>
</dbReference>
<dbReference type="EMBL" id="Z49704">
    <property type="protein sequence ID" value="CAA89785.1"/>
    <property type="molecule type" value="Genomic_DNA"/>
</dbReference>
<dbReference type="EMBL" id="D90217">
    <property type="status" value="NOT_ANNOTATED_CDS"/>
    <property type="molecule type" value="Genomic_DNA"/>
</dbReference>
<dbReference type="EMBL" id="BK006946">
    <property type="protein sequence ID" value="DAA10188.1"/>
    <property type="molecule type" value="Genomic_DNA"/>
</dbReference>
<dbReference type="PIR" id="S54594">
    <property type="entry name" value="S54594"/>
</dbReference>
<dbReference type="RefSeq" id="NP_014014.1">
    <property type="nucleotide sequence ID" value="NM_001182794.1"/>
</dbReference>
<dbReference type="SMR" id="P39112"/>
<dbReference type="BioGRID" id="35467">
    <property type="interactions" value="108"/>
</dbReference>
<dbReference type="ComplexPortal" id="CPX-3180">
    <property type="entry name" value="Mitochondrial degradosome complex"/>
</dbReference>
<dbReference type="DIP" id="DIP-2936N"/>
<dbReference type="FunCoup" id="P39112">
    <property type="interactions" value="142"/>
</dbReference>
<dbReference type="IntAct" id="P39112">
    <property type="interactions" value="7"/>
</dbReference>
<dbReference type="MINT" id="P39112"/>
<dbReference type="STRING" id="4932.YMR287C"/>
<dbReference type="iPTMnet" id="P39112"/>
<dbReference type="PaxDb" id="4932-YMR287C"/>
<dbReference type="PeptideAtlas" id="P39112"/>
<dbReference type="EnsemblFungi" id="YMR287C_mRNA">
    <property type="protein sequence ID" value="YMR287C"/>
    <property type="gene ID" value="YMR287C"/>
</dbReference>
<dbReference type="GeneID" id="855331"/>
<dbReference type="KEGG" id="sce:YMR287C"/>
<dbReference type="AGR" id="SGD:S000004900"/>
<dbReference type="SGD" id="S000004900">
    <property type="gene designation" value="DSS1"/>
</dbReference>
<dbReference type="VEuPathDB" id="FungiDB:YMR287C"/>
<dbReference type="eggNOG" id="KOG2102">
    <property type="taxonomic scope" value="Eukaryota"/>
</dbReference>
<dbReference type="GeneTree" id="ENSGT00530000063106"/>
<dbReference type="HOGENOM" id="CLU_012624_0_0_1"/>
<dbReference type="InParanoid" id="P39112"/>
<dbReference type="OMA" id="VFCIDSE"/>
<dbReference type="OrthoDB" id="2285229at2759"/>
<dbReference type="BioCyc" id="YEAST:G3O-32957-MONOMER"/>
<dbReference type="BRENDA" id="3.1.13.1">
    <property type="organism ID" value="984"/>
</dbReference>
<dbReference type="BioGRID-ORCS" id="855331">
    <property type="hits" value="3 hits in 10 CRISPR screens"/>
</dbReference>
<dbReference type="PRO" id="PR:P39112"/>
<dbReference type="Proteomes" id="UP000002311">
    <property type="component" value="Chromosome XIII"/>
</dbReference>
<dbReference type="RNAct" id="P39112">
    <property type="molecule type" value="protein"/>
</dbReference>
<dbReference type="GO" id="GO:0045025">
    <property type="term" value="C:mitochondrial degradosome"/>
    <property type="evidence" value="ECO:0000314"/>
    <property type="project" value="SGD"/>
</dbReference>
<dbReference type="GO" id="GO:0005759">
    <property type="term" value="C:mitochondrial matrix"/>
    <property type="evidence" value="ECO:0007669"/>
    <property type="project" value="UniProtKB-SubCell"/>
</dbReference>
<dbReference type="GO" id="GO:0005739">
    <property type="term" value="C:mitochondrion"/>
    <property type="evidence" value="ECO:0007005"/>
    <property type="project" value="SGD"/>
</dbReference>
<dbReference type="GO" id="GO:0000175">
    <property type="term" value="F:3'-5'-RNA exonuclease activity"/>
    <property type="evidence" value="ECO:0000318"/>
    <property type="project" value="GO_Central"/>
</dbReference>
<dbReference type="GO" id="GO:0008859">
    <property type="term" value="F:exoribonuclease II activity"/>
    <property type="evidence" value="ECO:0000314"/>
    <property type="project" value="SGD"/>
</dbReference>
<dbReference type="GO" id="GO:0003723">
    <property type="term" value="F:RNA binding"/>
    <property type="evidence" value="ECO:0007669"/>
    <property type="project" value="UniProtKB-KW"/>
</dbReference>
<dbReference type="GO" id="GO:0000957">
    <property type="term" value="P:mitochondrial RNA catabolic process"/>
    <property type="evidence" value="ECO:0000314"/>
    <property type="project" value="ComplexPortal"/>
</dbReference>
<dbReference type="GO" id="GO:0006402">
    <property type="term" value="P:mRNA catabolic process"/>
    <property type="evidence" value="ECO:0000318"/>
    <property type="project" value="GO_Central"/>
</dbReference>
<dbReference type="InterPro" id="IPR012340">
    <property type="entry name" value="NA-bd_OB-fold"/>
</dbReference>
<dbReference type="InterPro" id="IPR001900">
    <property type="entry name" value="RNase_II/R"/>
</dbReference>
<dbReference type="InterPro" id="IPR022966">
    <property type="entry name" value="RNase_II/R_CS"/>
</dbReference>
<dbReference type="InterPro" id="IPR050180">
    <property type="entry name" value="RNR_Ribonuclease"/>
</dbReference>
<dbReference type="PANTHER" id="PTHR23355:SF59">
    <property type="entry name" value="EXORIBONUCLEASE II, MITOCHONDRIAL"/>
    <property type="match status" value="1"/>
</dbReference>
<dbReference type="PANTHER" id="PTHR23355">
    <property type="entry name" value="RIBONUCLEASE"/>
    <property type="match status" value="1"/>
</dbReference>
<dbReference type="Pfam" id="PF00773">
    <property type="entry name" value="RNB"/>
    <property type="match status" value="1"/>
</dbReference>
<dbReference type="SMART" id="SM00955">
    <property type="entry name" value="RNB"/>
    <property type="match status" value="1"/>
</dbReference>
<dbReference type="SUPFAM" id="SSF50249">
    <property type="entry name" value="Nucleic acid-binding proteins"/>
    <property type="match status" value="1"/>
</dbReference>
<dbReference type="PROSITE" id="PS01175">
    <property type="entry name" value="RIBONUCLEASE_II"/>
    <property type="match status" value="1"/>
</dbReference>
<proteinExistence type="evidence at protein level"/>
<evidence type="ECO:0000255" key="1"/>
<evidence type="ECO:0000256" key="2">
    <source>
        <dbReference type="SAM" id="MobiDB-lite"/>
    </source>
</evidence>
<evidence type="ECO:0000269" key="3">
    <source>
    </source>
</evidence>
<evidence type="ECO:0000269" key="4">
    <source>
    </source>
</evidence>
<evidence type="ECO:0000269" key="5">
    <source>
    </source>
</evidence>
<evidence type="ECO:0000305" key="6"/>
<comment type="function">
    <text>Essential for mitochondrial biogenesis.</text>
</comment>
<comment type="function">
    <text>Required for intron-independent turnover and processing of mitochondrial RNA. Participates in 3' mtRNA processing where it hydrolyzes single-stranded RNA or partially double-stranded RNA with 3' single-stranded tails.</text>
</comment>
<comment type="catalytic activity">
    <reaction>
        <text>Exonucleolytic cleavage in the 3'- to 5'-direction to yield nucleoside 5'-phosphates.</text>
        <dbReference type="EC" id="3.1.13.1"/>
    </reaction>
</comment>
<comment type="subunit">
    <text evidence="3">MSU1 and SUV3 are the two components of the mitochondrial degradosome (mtEXO).</text>
</comment>
<comment type="interaction">
    <interactant intactId="EBI-11468">
        <id>P39112</id>
    </interactant>
    <interactant intactId="EBI-18594">
        <id>P32580</id>
        <label>SUV3</label>
    </interactant>
    <organismsDiffer>false</organismsDiffer>
    <experiments>2</experiments>
</comment>
<comment type="subcellular location">
    <subcellularLocation>
        <location evidence="5">Mitochondrion matrix</location>
    </subcellularLocation>
</comment>
<comment type="miscellaneous">
    <text evidence="4">Present with 1070 molecules/cell in log phase SD medium.</text>
</comment>
<comment type="similarity">
    <text evidence="6">Belongs to the RNR ribonuclease family.</text>
</comment>
<protein>
    <recommendedName>
        <fullName>Exoribonuclease II, mitochondrial</fullName>
        <shortName>RNase II</shortName>
        <shortName>Ribonuclease II</shortName>
        <ecNumber>3.1.13.1</ecNumber>
    </recommendedName>
    <alternativeName>
        <fullName>Deletion of SUV3 suppressor 1</fullName>
    </alternativeName>
    <alternativeName>
        <fullName>Mitochondrial biogenesis protein MSU1</fullName>
    </alternativeName>
</protein>
<sequence>MVVRRKVHVLLIARSFHSYTPCFRVTTRGKRQRSKSKQQAKVELDHTRELDNDQATETVVDRSVGPEKDIESINKDFLQRTKGLEPDIELKQLPQIKQEFNQRYKDRYVKPSEDWYVNSWRSLTKPKIPLYKLINSDFQLITKLKAPNPMEFQPVQLMESPLNVGDFVLLKMRPNELAMCVSLPSSTMDPRYTFVTIDGTMCFATKNRVLLRIPHKLPAGIHSLIQPESHHKHLPIGTVKNFSNQTNILPIVARQLITSRYPAQISKLAWKDLPITTKKLQLLHRSLQNYMGPWQIPFFTLVGLVQKLDLNKALDDKNGINYLTSLVNNYHTVNDIPINSPTFVSTYWAIMQQQESNLWGEIHLNTALLSPISVTIIPLKSQHLYYAQVIEKLEANSYREVNKFVKLVNERKYRDISALYPSVIQLLKDFAAGNFHNNGIIVALISKIFRKIERYKDCDITRDICQDLINEITPNSIPNPLLLNMDLALPASSKLVKWQQKLYDLTNIEELQWKKSGTDDDRYDFGDLRVFCIDSETAHEIDDGVSVKNYGRDGLYTLYIHIADPTSMFPESTNVDIEGISTDILNVALKRSFTTYLPDTVVPMLPQSICHLSDLGKQGQRTKTISFSVDVKITSKCSGKSIEIMYDSFKIRKGIVSNFPKATYEDVDRILGTPNSEASPVKKDLESLSMISKLLREQRIKNSNAVIFGEGFNKGLVMLNADSEGELTEVTFSDQEETLSTILVSEMMILANTLTGRYFAENKIGGVFRCYKQLPLGEVAQQQYDSMITSTKKGIFPKLKDIVKLSSLLNSSFYTGRPFRHEMIGAKQYLTVTSPLRRFPDLINHLQIHRHLQKKPLCFNQTQIDSLIWPIQSRADILKRASRNSSTYWTLNYLKKLTKLEPERTFDVMVTSVPQNGFTGCVFPDLSFARGTLKLHPSSMHYPMIGDIVKNCKISKIDCLEGMLELEKL</sequence>
<feature type="transit peptide" description="Mitochondrion" evidence="3">
    <location>
        <begin position="1"/>
        <end position="41"/>
    </location>
</feature>
<feature type="chain" id="PRO_0000030820" description="Exoribonuclease II, mitochondrial">
    <location>
        <begin position="42"/>
        <end position="969"/>
    </location>
</feature>
<feature type="domain" description="RNB" evidence="1">
    <location>
        <begin position="522"/>
        <end position="853"/>
    </location>
</feature>
<feature type="region of interest" description="Disordered" evidence="2">
    <location>
        <begin position="28"/>
        <end position="54"/>
    </location>
</feature>
<feature type="compositionally biased region" description="Basic residues" evidence="2">
    <location>
        <begin position="28"/>
        <end position="38"/>
    </location>
</feature>
<feature type="compositionally biased region" description="Basic and acidic residues" evidence="2">
    <location>
        <begin position="40"/>
        <end position="51"/>
    </location>
</feature>
<feature type="sequence conflict" description="In Ref. 1; AAC49144." evidence="6" ref="1">
    <original>H</original>
    <variation>R</variation>
    <location>
        <position position="222"/>
    </location>
</feature>
<feature type="sequence conflict" description="In Ref. 4; D90217." evidence="6" ref="4">
    <original>P</original>
    <variation>T</variation>
    <location>
        <position position="870"/>
    </location>
</feature>
<keyword id="KW-0903">Direct protein sequencing</keyword>
<keyword id="KW-0269">Exonuclease</keyword>
<keyword id="KW-0378">Hydrolase</keyword>
<keyword id="KW-0496">Mitochondrion</keyword>
<keyword id="KW-0540">Nuclease</keyword>
<keyword id="KW-1185">Reference proteome</keyword>
<keyword id="KW-0694">RNA-binding</keyword>
<keyword id="KW-0809">Transit peptide</keyword>
<organism>
    <name type="scientific">Saccharomyces cerevisiae (strain ATCC 204508 / S288c)</name>
    <name type="common">Baker's yeast</name>
    <dbReference type="NCBI Taxonomy" id="559292"/>
    <lineage>
        <taxon>Eukaryota</taxon>
        <taxon>Fungi</taxon>
        <taxon>Dikarya</taxon>
        <taxon>Ascomycota</taxon>
        <taxon>Saccharomycotina</taxon>
        <taxon>Saccharomycetes</taxon>
        <taxon>Saccharomycetales</taxon>
        <taxon>Saccharomycetaceae</taxon>
        <taxon>Saccharomyces</taxon>
    </lineage>
</organism>
<reference key="1">
    <citation type="journal article" date="1995" name="Curr. Genet.">
        <title>The novel nuclear gene DSS-1 of Saccharomyces cerevisiae is necessary for mitochondrial biogenesis.</title>
        <authorList>
            <person name="Dmochowska A."/>
            <person name="Golik P."/>
            <person name="Stepien P.P."/>
        </authorList>
    </citation>
    <scope>NUCLEOTIDE SEQUENCE [GENOMIC DNA]</scope>
</reference>
<reference key="2">
    <citation type="journal article" date="1997" name="Nature">
        <title>The nucleotide sequence of Saccharomyces cerevisiae chromosome XIII.</title>
        <authorList>
            <person name="Bowman S."/>
            <person name="Churcher C.M."/>
            <person name="Badcock K."/>
            <person name="Brown D."/>
            <person name="Chillingworth T."/>
            <person name="Connor R."/>
            <person name="Dedman K."/>
            <person name="Devlin K."/>
            <person name="Gentles S."/>
            <person name="Hamlin N."/>
            <person name="Hunt S."/>
            <person name="Jagels K."/>
            <person name="Lye G."/>
            <person name="Moule S."/>
            <person name="Odell C."/>
            <person name="Pearson D."/>
            <person name="Rajandream M.A."/>
            <person name="Rice P."/>
            <person name="Skelton J."/>
            <person name="Walsh S.V."/>
            <person name="Whitehead S."/>
            <person name="Barrell B.G."/>
        </authorList>
    </citation>
    <scope>NUCLEOTIDE SEQUENCE [LARGE SCALE GENOMIC DNA]</scope>
    <source>
        <strain>ATCC 204508 / S288c</strain>
    </source>
</reference>
<reference key="3">
    <citation type="journal article" date="2014" name="G3 (Bethesda)">
        <title>The reference genome sequence of Saccharomyces cerevisiae: Then and now.</title>
        <authorList>
            <person name="Engel S.R."/>
            <person name="Dietrich F.S."/>
            <person name="Fisk D.G."/>
            <person name="Binkley G."/>
            <person name="Balakrishnan R."/>
            <person name="Costanzo M.C."/>
            <person name="Dwight S.S."/>
            <person name="Hitz B.C."/>
            <person name="Karra K."/>
            <person name="Nash R.S."/>
            <person name="Weng S."/>
            <person name="Wong E.D."/>
            <person name="Lloyd P."/>
            <person name="Skrzypek M.S."/>
            <person name="Miyasato S.R."/>
            <person name="Simison M."/>
            <person name="Cherry J.M."/>
        </authorList>
    </citation>
    <scope>GENOME REANNOTATION</scope>
    <source>
        <strain>ATCC 204508 / S288c</strain>
    </source>
</reference>
<reference key="4">
    <citation type="journal article" date="1991" name="J. Bacteriol.">
        <title>Cloning and analysis of the nuclear gene for YmL33, a protein of the large subunit of the mitochondrial ribosome in Saccharomyces cerevisiae.</title>
        <authorList>
            <person name="Kang W.K."/>
            <person name="Matsushita Y."/>
            <person name="Grohmann L."/>
            <person name="Graack H.-R."/>
            <person name="Kitakawa M."/>
            <person name="Isono K."/>
        </authorList>
    </citation>
    <scope>NUCLEOTIDE SEQUENCE [GENOMIC DNA] OF 804-969</scope>
</reference>
<reference key="5">
    <citation type="journal article" date="2003" name="J. Biol. Chem.">
        <title>The yeast mitochondrial degradosome. Its composition, interplay between RNA helicase and RNase activities and the role in mitochondrial RNA metabolism.</title>
        <authorList>
            <person name="Dziembowski A."/>
            <person name="Piwowarski J."/>
            <person name="Hoser R."/>
            <person name="Minczuk M."/>
            <person name="Dmochowska A."/>
            <person name="Siep M."/>
            <person name="van der Spek H."/>
            <person name="Grivell L.A."/>
            <person name="Stepien P.P."/>
        </authorList>
    </citation>
    <scope>PROTEIN SEQUENCE OF 42-62; 133-142; 415-428; 502-514; 702-714 AND 828-837</scope>
    <scope>FUNCTION</scope>
    <scope>SUBUNIT</scope>
</reference>
<reference key="6">
    <citation type="journal article" date="1998" name="Mol. Gen. Genet.">
        <title>The yeast nuclear gene DSS1, which codes for a putative RNase II, is necessary for the function of the mitochondrial degradosome in processing and turnover of RNA.</title>
        <authorList>
            <person name="Dziembowski A."/>
            <person name="Malewicz M."/>
            <person name="Minczuk M."/>
            <person name="Golik P."/>
            <person name="Dmochowska A."/>
            <person name="Stepien P.P."/>
        </authorList>
    </citation>
    <scope>FUNCTION</scope>
</reference>
<reference key="7">
    <citation type="journal article" date="2003" name="Nature">
        <title>Global analysis of protein expression in yeast.</title>
        <authorList>
            <person name="Ghaemmaghami S."/>
            <person name="Huh W.-K."/>
            <person name="Bower K."/>
            <person name="Howson R.W."/>
            <person name="Belle A."/>
            <person name="Dephoure N."/>
            <person name="O'Shea E.K."/>
            <person name="Weissman J.S."/>
        </authorList>
    </citation>
    <scope>LEVEL OF PROTEIN EXPRESSION [LARGE SCALE ANALYSIS]</scope>
</reference>
<reference key="8">
    <citation type="journal article" date="2003" name="Proc. Natl. Acad. Sci. U.S.A.">
        <title>The proteome of Saccharomyces cerevisiae mitochondria.</title>
        <authorList>
            <person name="Sickmann A."/>
            <person name="Reinders J."/>
            <person name="Wagner Y."/>
            <person name="Joppich C."/>
            <person name="Zahedi R.P."/>
            <person name="Meyer H.E."/>
            <person name="Schoenfisch B."/>
            <person name="Perschil I."/>
            <person name="Chacinska A."/>
            <person name="Guiard B."/>
            <person name="Rehling P."/>
            <person name="Pfanner N."/>
            <person name="Meisinger C."/>
        </authorList>
    </citation>
    <scope>SUBCELLULAR LOCATION [LARGE SCALE ANALYSIS]</scope>
    <source>
        <strain>ATCC 76625 / YPH499</strain>
    </source>
</reference>
<name>DSS1_YEAST</name>
<accession>P39112</accession>
<accession>D6W0B4</accession>
<gene>
    <name type="primary">DSS1</name>
    <name type="synonym">MSU1</name>
    <name type="ordered locus">YMR287C</name>
    <name type="ORF">YM8021.13C</name>
</gene>